<evidence type="ECO:0000250" key="1">
    <source>
        <dbReference type="UniProtKB" id="O08689"/>
    </source>
</evidence>
<evidence type="ECO:0000250" key="2">
    <source>
        <dbReference type="UniProtKB" id="O14793"/>
    </source>
</evidence>
<evidence type="ECO:0000255" key="3"/>
<evidence type="ECO:0000305" key="4"/>
<sequence length="375" mass="42722">MQKLQLCVYIYLFMLIVAGPVDLNENSEQKENVEKEGLCNACTWRQNTKSSRIEAIKIQILSKLRLETAPNISKDAIRQLLPKAPPLRELIDQYDVQRDDSSDGSLEDDDYHATTETIITMPTESDFLMQVDGKPKCCFFKFSSKIQYNKVVKAQLWIYLRPVETPTTVFVQILRLIKPMKDGTRYTGIRSLKLDMNPGTGIWQSIDVKTVLQNWLKQPESNLGIEIKALDENGHDLAVTFPGPGEDGLNPFLEVKVTDTPKRSRRDFGLDCDEHSTESRCCRYPLTVDFEAFGWDWIIAPKRYKANYCSGECEFVFLQKYPHTHLVHQANPRGSAGPCCTPTKMSPINMLYFNGKEQIIYGKIPAMVVDRCGCS</sequence>
<dbReference type="EMBL" id="DQ927204">
    <property type="protein sequence ID" value="ABI48527.1"/>
    <property type="molecule type" value="Genomic_DNA"/>
</dbReference>
<dbReference type="EMBL" id="DQ927205">
    <property type="protein sequence ID" value="ABI48528.1"/>
    <property type="molecule type" value="Genomic_DNA"/>
</dbReference>
<dbReference type="RefSeq" id="XP_018877573.1">
    <property type="nucleotide sequence ID" value="XM_019022028.4"/>
</dbReference>
<dbReference type="SMR" id="A1C2V5"/>
<dbReference type="FunCoup" id="A1C2V5">
    <property type="interactions" value="327"/>
</dbReference>
<dbReference type="STRING" id="9593.ENSGGOP00000022753"/>
<dbReference type="GlyCosmos" id="A1C2V5">
    <property type="glycosylation" value="1 site, No reported glycans"/>
</dbReference>
<dbReference type="GeneID" id="101135255"/>
<dbReference type="KEGG" id="ggo:101135255"/>
<dbReference type="CTD" id="2660"/>
<dbReference type="eggNOG" id="KOG3900">
    <property type="taxonomic scope" value="Eukaryota"/>
</dbReference>
<dbReference type="HOGENOM" id="CLU_020515_6_1_1"/>
<dbReference type="InParanoid" id="A1C2V5"/>
<dbReference type="OMA" id="CNACMWR"/>
<dbReference type="OrthoDB" id="2803at9604"/>
<dbReference type="Proteomes" id="UP000001519">
    <property type="component" value="Unplaced"/>
</dbReference>
<dbReference type="GO" id="GO:0005615">
    <property type="term" value="C:extracellular space"/>
    <property type="evidence" value="ECO:0000318"/>
    <property type="project" value="GO_Central"/>
</dbReference>
<dbReference type="GO" id="GO:0005125">
    <property type="term" value="F:cytokine activity"/>
    <property type="evidence" value="ECO:0000318"/>
    <property type="project" value="GO_Central"/>
</dbReference>
<dbReference type="GO" id="GO:0008083">
    <property type="term" value="F:growth factor activity"/>
    <property type="evidence" value="ECO:0007669"/>
    <property type="project" value="UniProtKB-KW"/>
</dbReference>
<dbReference type="GO" id="GO:0008201">
    <property type="term" value="F:heparin binding"/>
    <property type="evidence" value="ECO:0007669"/>
    <property type="project" value="UniProtKB-KW"/>
</dbReference>
<dbReference type="GO" id="GO:0042802">
    <property type="term" value="F:identical protein binding"/>
    <property type="evidence" value="ECO:0000250"/>
    <property type="project" value="UniProtKB"/>
</dbReference>
<dbReference type="GO" id="GO:0014839">
    <property type="term" value="P:myoblast migration involved in skeletal muscle regeneration"/>
    <property type="evidence" value="ECO:0000250"/>
    <property type="project" value="UniProtKB"/>
</dbReference>
<dbReference type="GO" id="GO:2000818">
    <property type="term" value="P:negative regulation of myoblast proliferation"/>
    <property type="evidence" value="ECO:0000250"/>
    <property type="project" value="AgBase"/>
</dbReference>
<dbReference type="GO" id="GO:1902725">
    <property type="term" value="P:negative regulation of satellite cell differentiation"/>
    <property type="evidence" value="ECO:0000250"/>
    <property type="project" value="AgBase"/>
</dbReference>
<dbReference type="GO" id="GO:1902723">
    <property type="term" value="P:negative regulation of skeletal muscle satellite cell proliferation"/>
    <property type="evidence" value="ECO:0000250"/>
    <property type="project" value="AgBase"/>
</dbReference>
<dbReference type="GO" id="GO:0010592">
    <property type="term" value="P:positive regulation of lamellipodium assembly"/>
    <property type="evidence" value="ECO:0000250"/>
    <property type="project" value="UniProtKB"/>
</dbReference>
<dbReference type="GO" id="GO:0010759">
    <property type="term" value="P:positive regulation of macrophage chemotaxis"/>
    <property type="evidence" value="ECO:0000250"/>
    <property type="project" value="UniProtKB"/>
</dbReference>
<dbReference type="CDD" id="cd19388">
    <property type="entry name" value="TGF_beta_GDF8"/>
    <property type="match status" value="1"/>
</dbReference>
<dbReference type="FunFam" id="2.60.120.970:FF:000001">
    <property type="entry name" value="Growth/differentiation factor 8"/>
    <property type="match status" value="1"/>
</dbReference>
<dbReference type="FunFam" id="2.10.90.10:FF:000006">
    <property type="entry name" value="growth/differentiation factor 8"/>
    <property type="match status" value="1"/>
</dbReference>
<dbReference type="Gene3D" id="2.60.120.970">
    <property type="match status" value="1"/>
</dbReference>
<dbReference type="Gene3D" id="2.10.90.10">
    <property type="entry name" value="Cystine-knot cytokines"/>
    <property type="match status" value="1"/>
</dbReference>
<dbReference type="InterPro" id="IPR029034">
    <property type="entry name" value="Cystine-knot_cytokine"/>
</dbReference>
<dbReference type="InterPro" id="IPR001839">
    <property type="entry name" value="TGF-b_C"/>
</dbReference>
<dbReference type="InterPro" id="IPR001111">
    <property type="entry name" value="TGF-b_propeptide"/>
</dbReference>
<dbReference type="InterPro" id="IPR015615">
    <property type="entry name" value="TGF-beta-rel"/>
</dbReference>
<dbReference type="InterPro" id="IPR017948">
    <property type="entry name" value="TGFb_CS"/>
</dbReference>
<dbReference type="PANTHER" id="PTHR11848:SF150">
    <property type="entry name" value="GROWTH_DIFFERENTIATION FACTOR 8"/>
    <property type="match status" value="1"/>
</dbReference>
<dbReference type="PANTHER" id="PTHR11848">
    <property type="entry name" value="TGF-BETA FAMILY"/>
    <property type="match status" value="1"/>
</dbReference>
<dbReference type="Pfam" id="PF00019">
    <property type="entry name" value="TGF_beta"/>
    <property type="match status" value="1"/>
</dbReference>
<dbReference type="Pfam" id="PF00688">
    <property type="entry name" value="TGFb_propeptide"/>
    <property type="match status" value="1"/>
</dbReference>
<dbReference type="SMART" id="SM00204">
    <property type="entry name" value="TGFB"/>
    <property type="match status" value="1"/>
</dbReference>
<dbReference type="SUPFAM" id="SSF57501">
    <property type="entry name" value="Cystine-knot cytokines"/>
    <property type="match status" value="1"/>
</dbReference>
<dbReference type="PROSITE" id="PS00250">
    <property type="entry name" value="TGF_BETA_1"/>
    <property type="match status" value="1"/>
</dbReference>
<dbReference type="PROSITE" id="PS51362">
    <property type="entry name" value="TGF_BETA_2"/>
    <property type="match status" value="1"/>
</dbReference>
<feature type="signal peptide" evidence="3">
    <location>
        <begin position="1"/>
        <end position="23"/>
    </location>
</feature>
<feature type="propeptide" id="PRO_0000285560" evidence="3">
    <location>
        <begin position="24"/>
        <end position="266"/>
    </location>
</feature>
<feature type="chain" id="PRO_0000285561" description="Growth/differentiation factor 8">
    <location>
        <begin position="267"/>
        <end position="375"/>
    </location>
</feature>
<feature type="site" description="Cleavage" evidence="1">
    <location>
        <begin position="98"/>
        <end position="99"/>
    </location>
</feature>
<feature type="glycosylation site" description="N-linked (GlcNAc...) asparagine" evidence="3">
    <location>
        <position position="71"/>
    </location>
</feature>
<feature type="disulfide bond" evidence="2">
    <location>
        <begin position="272"/>
        <end position="282"/>
    </location>
</feature>
<feature type="disulfide bond" evidence="2">
    <location>
        <begin position="281"/>
        <end position="340"/>
    </location>
</feature>
<feature type="disulfide bond" evidence="2">
    <location>
        <begin position="309"/>
        <end position="372"/>
    </location>
</feature>
<feature type="disulfide bond" evidence="2">
    <location>
        <begin position="313"/>
        <end position="374"/>
    </location>
</feature>
<feature type="disulfide bond" description="Interchain" evidence="2">
    <location>
        <position position="339"/>
    </location>
</feature>
<comment type="function">
    <text evidence="1">Acts specifically as a negative regulator of skeletal muscle growth.</text>
</comment>
<comment type="subunit">
    <text evidence="1">Homodimer; disulfide-linked. Interacts with WFIKKN2, leading to inhibit its activity. Interacts with FSTL3.</text>
</comment>
<comment type="subcellular location">
    <subcellularLocation>
        <location evidence="1">Secreted</location>
    </subcellularLocation>
</comment>
<comment type="PTM">
    <text evidence="1">Synthesized as large precursor molecule that undergoes proteolytic cleavage to generate an N-terminal propeptide and a disulfide linked C-terminal dimer, which is the biologically active molecule. The circulating form consists of a latent complex of the C-terminal dimer and other proteins, including its propeptide, which maintain the C-terminal dimer in a latent, inactive state. Ligand activation requires additional cleavage of the prodomain by a tolloid-like metalloproteinase.</text>
</comment>
<comment type="similarity">
    <text evidence="4">Belongs to the TGF-beta family.</text>
</comment>
<protein>
    <recommendedName>
        <fullName>Growth/differentiation factor 8</fullName>
        <shortName>GDF-8</shortName>
    </recommendedName>
    <alternativeName>
        <fullName>Myostatin</fullName>
    </alternativeName>
</protein>
<name>GDF8_GORGO</name>
<organism>
    <name type="scientific">Gorilla gorilla gorilla</name>
    <name type="common">Western lowland gorilla</name>
    <dbReference type="NCBI Taxonomy" id="9595"/>
    <lineage>
        <taxon>Eukaryota</taxon>
        <taxon>Metazoa</taxon>
        <taxon>Chordata</taxon>
        <taxon>Craniata</taxon>
        <taxon>Vertebrata</taxon>
        <taxon>Euteleostomi</taxon>
        <taxon>Mammalia</taxon>
        <taxon>Eutheria</taxon>
        <taxon>Euarchontoglires</taxon>
        <taxon>Primates</taxon>
        <taxon>Haplorrhini</taxon>
        <taxon>Catarrhini</taxon>
        <taxon>Hominidae</taxon>
        <taxon>Gorilla</taxon>
    </lineage>
</organism>
<keyword id="KW-0165">Cleavage on pair of basic residues</keyword>
<keyword id="KW-0202">Cytokine</keyword>
<keyword id="KW-1015">Disulfide bond</keyword>
<keyword id="KW-0325">Glycoprotein</keyword>
<keyword id="KW-0339">Growth factor</keyword>
<keyword id="KW-0358">Heparin-binding</keyword>
<keyword id="KW-1185">Reference proteome</keyword>
<keyword id="KW-0964">Secreted</keyword>
<keyword id="KW-0732">Signal</keyword>
<gene>
    <name type="primary">MSTN</name>
    <name type="synonym">GDF8</name>
</gene>
<proteinExistence type="inferred from homology"/>
<reference key="1">
    <citation type="journal article" date="2006" name="Am. J. Hum. Genet.">
        <title>Human adaptive evolution at myostatin (GDF8), a regulator of muscle growth.</title>
        <authorList>
            <person name="Saunders M.A."/>
            <person name="Good J.M."/>
            <person name="Lawrence E.C."/>
            <person name="Ferrell R.E."/>
            <person name="Li W.H."/>
            <person name="Nachman M.W."/>
        </authorList>
    </citation>
    <scope>NUCLEOTIDE SEQUENCE [GENOMIC DNA]</scope>
</reference>
<accession>A1C2V5</accession>